<sequence>MQSDDVIWDTLGNKQFCSFKIRTKTQSFCRNEYSLTGLCNRSSCPLANSQYATIKEEKGQCYLYMKVIERAAFPRRLWERVRLHKNYEKALEQIDENLIYWPRFIRHKCKQRFTKITQYLIRIRKLTLKRQRKLVPLSKKVERREKRREEKALIAAQLDNAIEKELLERLKQDTYGDIYNFPIHAFDKALEQQEAESDSSDAEEKDDEEDEEDVGKREFVEDDEVDESDISDFEDMDKLDASSDEDQDDKSSSEEEEKTLDAKHKGKTPLKGPLRRKRAYVEIEYEQETEPAAKAKTT</sequence>
<proteinExistence type="evidence at transcript level"/>
<dbReference type="EMBL" id="BC114829">
    <property type="protein sequence ID" value="AAI14830.1"/>
    <property type="molecule type" value="mRNA"/>
</dbReference>
<dbReference type="RefSeq" id="NP_001068638.1">
    <property type="nucleotide sequence ID" value="NM_001075170.1"/>
</dbReference>
<dbReference type="SMR" id="Q1RML7"/>
<dbReference type="FunCoup" id="Q1RML7">
    <property type="interactions" value="4576"/>
</dbReference>
<dbReference type="STRING" id="9913.ENSBTAP00000044825"/>
<dbReference type="PaxDb" id="9913-ENSBTAP00000044825"/>
<dbReference type="Ensembl" id="ENSBTAT00000047639.2">
    <property type="protein sequence ID" value="ENSBTAP00000044825.1"/>
    <property type="gene ID" value="ENSBTAG00000033504.2"/>
</dbReference>
<dbReference type="GeneID" id="504683"/>
<dbReference type="KEGG" id="bta:504683"/>
<dbReference type="CTD" id="84549"/>
<dbReference type="VEuPathDB" id="HostDB:ENSBTAG00000033504"/>
<dbReference type="VGNC" id="VGNC:31153">
    <property type="gene designation" value="MAK16"/>
</dbReference>
<dbReference type="eggNOG" id="KOG3064">
    <property type="taxonomic scope" value="Eukaryota"/>
</dbReference>
<dbReference type="GeneTree" id="ENSGT00390000012859"/>
<dbReference type="HOGENOM" id="CLU_050888_2_0_1"/>
<dbReference type="InParanoid" id="Q1RML7"/>
<dbReference type="OMA" id="DKGQNFC"/>
<dbReference type="OrthoDB" id="10251342at2759"/>
<dbReference type="TreeFam" id="TF105759"/>
<dbReference type="Proteomes" id="UP000009136">
    <property type="component" value="Chromosome 27"/>
</dbReference>
<dbReference type="Bgee" id="ENSBTAG00000033504">
    <property type="expression patterns" value="Expressed in conceptus and 105 other cell types or tissues"/>
</dbReference>
<dbReference type="GO" id="GO:0005730">
    <property type="term" value="C:nucleolus"/>
    <property type="evidence" value="ECO:0000318"/>
    <property type="project" value="GO_Central"/>
</dbReference>
<dbReference type="GO" id="GO:0030687">
    <property type="term" value="C:preribosome, large subunit precursor"/>
    <property type="evidence" value="ECO:0000318"/>
    <property type="project" value="GO_Central"/>
</dbReference>
<dbReference type="GO" id="GO:0000460">
    <property type="term" value="P:maturation of 5.8S rRNA"/>
    <property type="evidence" value="ECO:0000318"/>
    <property type="project" value="GO_Central"/>
</dbReference>
<dbReference type="GO" id="GO:0000470">
    <property type="term" value="P:maturation of LSU-rRNA"/>
    <property type="evidence" value="ECO:0000318"/>
    <property type="project" value="GO_Central"/>
</dbReference>
<dbReference type="FunFam" id="3.30.390.110:FF:000003">
    <property type="entry name" value="Protein MAK16 homolog"/>
    <property type="match status" value="1"/>
</dbReference>
<dbReference type="Gene3D" id="3.30.390.110">
    <property type="match status" value="1"/>
</dbReference>
<dbReference type="InterPro" id="IPR006958">
    <property type="entry name" value="Mak16"/>
</dbReference>
<dbReference type="InterPro" id="IPR029004">
    <property type="entry name" value="Ribosomal_eL28/Mak16"/>
</dbReference>
<dbReference type="PANTHER" id="PTHR23405">
    <property type="entry name" value="MAINTENANCE OF KILLER 16 MAK16 PROTEIN-RELATED"/>
    <property type="match status" value="1"/>
</dbReference>
<dbReference type="PANTHER" id="PTHR23405:SF4">
    <property type="entry name" value="PROTEIN MAK16 HOMOLOG"/>
    <property type="match status" value="1"/>
</dbReference>
<dbReference type="Pfam" id="PF04874">
    <property type="entry name" value="Mak16"/>
    <property type="match status" value="1"/>
</dbReference>
<dbReference type="Pfam" id="PF01778">
    <property type="entry name" value="Ribosomal_L28e"/>
    <property type="match status" value="1"/>
</dbReference>
<dbReference type="PIRSF" id="PIRSF003352">
    <property type="entry name" value="MAK16"/>
    <property type="match status" value="1"/>
</dbReference>
<feature type="chain" id="PRO_0000343653" description="Protein MAK16 homolog">
    <location>
        <begin position="1"/>
        <end position="298"/>
    </location>
</feature>
<feature type="region of interest" description="Disordered" evidence="3">
    <location>
        <begin position="190"/>
        <end position="276"/>
    </location>
</feature>
<feature type="compositionally biased region" description="Acidic residues" evidence="3">
    <location>
        <begin position="193"/>
        <end position="213"/>
    </location>
</feature>
<feature type="compositionally biased region" description="Acidic residues" evidence="3">
    <location>
        <begin position="220"/>
        <end position="235"/>
    </location>
</feature>
<feature type="compositionally biased region" description="Basic and acidic residues" evidence="3">
    <location>
        <begin position="249"/>
        <end position="263"/>
    </location>
</feature>
<feature type="compositionally biased region" description="Basic residues" evidence="3">
    <location>
        <begin position="264"/>
        <end position="276"/>
    </location>
</feature>
<feature type="modified residue" description="N-acetylmethionine" evidence="2">
    <location>
        <position position="1"/>
    </location>
</feature>
<feature type="modified residue" description="Phosphoserine" evidence="2">
    <location>
        <position position="197"/>
    </location>
</feature>
<feature type="modified residue" description="Phosphoserine" evidence="2">
    <location>
        <position position="200"/>
    </location>
</feature>
<feature type="modified residue" description="Phosphoserine" evidence="2">
    <location>
        <position position="228"/>
    </location>
</feature>
<feature type="modified residue" description="Phosphoserine" evidence="2">
    <location>
        <position position="231"/>
    </location>
</feature>
<feature type="cross-link" description="Glycyl lysine isopeptide (Lys-Gly) (interchain with G-Cter in SUMO2)" evidence="2">
    <location>
        <position position="55"/>
    </location>
</feature>
<feature type="cross-link" description="Glycyl lysine isopeptide (Lys-Gly) (interchain with G-Cter in SUMO2)" evidence="2">
    <location>
        <position position="151"/>
    </location>
</feature>
<protein>
    <recommendedName>
        <fullName>Protein MAK16 homolog</fullName>
    </recommendedName>
</protein>
<organism>
    <name type="scientific">Bos taurus</name>
    <name type="common">Bovine</name>
    <dbReference type="NCBI Taxonomy" id="9913"/>
    <lineage>
        <taxon>Eukaryota</taxon>
        <taxon>Metazoa</taxon>
        <taxon>Chordata</taxon>
        <taxon>Craniata</taxon>
        <taxon>Vertebrata</taxon>
        <taxon>Euteleostomi</taxon>
        <taxon>Mammalia</taxon>
        <taxon>Eutheria</taxon>
        <taxon>Laurasiatheria</taxon>
        <taxon>Artiodactyla</taxon>
        <taxon>Ruminantia</taxon>
        <taxon>Pecora</taxon>
        <taxon>Bovidae</taxon>
        <taxon>Bovinae</taxon>
        <taxon>Bos</taxon>
    </lineage>
</organism>
<keyword id="KW-0007">Acetylation</keyword>
<keyword id="KW-1017">Isopeptide bond</keyword>
<keyword id="KW-0539">Nucleus</keyword>
<keyword id="KW-0597">Phosphoprotein</keyword>
<keyword id="KW-1185">Reference proteome</keyword>
<keyword id="KW-0832">Ubl conjugation</keyword>
<name>MAK16_BOVIN</name>
<accession>Q1RML7</accession>
<reference key="1">
    <citation type="submission" date="2006-04" db="EMBL/GenBank/DDBJ databases">
        <authorList>
            <consortium name="NIH - Mammalian Gene Collection (MGC) project"/>
        </authorList>
    </citation>
    <scope>NUCLEOTIDE SEQUENCE [LARGE SCALE MRNA]</scope>
    <source>
        <strain>Hereford</strain>
        <tissue>Thymus</tissue>
    </source>
</reference>
<comment type="subcellular location">
    <subcellularLocation>
        <location evidence="1">Nucleus</location>
        <location evidence="1">Nucleolus</location>
    </subcellularLocation>
</comment>
<comment type="similarity">
    <text evidence="4">Belongs to the MAK16 family.</text>
</comment>
<gene>
    <name type="primary">MAK16</name>
</gene>
<evidence type="ECO:0000250" key="1"/>
<evidence type="ECO:0000250" key="2">
    <source>
        <dbReference type="UniProtKB" id="Q9BXY0"/>
    </source>
</evidence>
<evidence type="ECO:0000256" key="3">
    <source>
        <dbReference type="SAM" id="MobiDB-lite"/>
    </source>
</evidence>
<evidence type="ECO:0000305" key="4"/>